<dbReference type="EMBL" id="AF465237">
    <property type="protein sequence ID" value="AAN28326.2"/>
    <property type="molecule type" value="Genomic_DNA"/>
</dbReference>
<dbReference type="SMR" id="Q8GP20"/>
<dbReference type="STRING" id="273526.SMDB11_3306"/>
<dbReference type="GO" id="GO:0005829">
    <property type="term" value="C:cytosol"/>
    <property type="evidence" value="ECO:0007669"/>
    <property type="project" value="TreeGrafter"/>
</dbReference>
<dbReference type="GO" id="GO:0032993">
    <property type="term" value="C:protein-DNA complex"/>
    <property type="evidence" value="ECO:0007669"/>
    <property type="project" value="TreeGrafter"/>
</dbReference>
<dbReference type="GO" id="GO:0000156">
    <property type="term" value="F:phosphorelay response regulator activity"/>
    <property type="evidence" value="ECO:0007669"/>
    <property type="project" value="TreeGrafter"/>
</dbReference>
<dbReference type="GO" id="GO:0000976">
    <property type="term" value="F:transcription cis-regulatory region binding"/>
    <property type="evidence" value="ECO:0007669"/>
    <property type="project" value="TreeGrafter"/>
</dbReference>
<dbReference type="GO" id="GO:0006355">
    <property type="term" value="P:regulation of DNA-templated transcription"/>
    <property type="evidence" value="ECO:0007669"/>
    <property type="project" value="InterPro"/>
</dbReference>
<dbReference type="CDD" id="cd17624">
    <property type="entry name" value="REC_OmpR_PmrA-like"/>
    <property type="match status" value="1"/>
</dbReference>
<dbReference type="CDD" id="cd00383">
    <property type="entry name" value="trans_reg_C"/>
    <property type="match status" value="1"/>
</dbReference>
<dbReference type="Gene3D" id="3.40.50.2300">
    <property type="match status" value="1"/>
</dbReference>
<dbReference type="Gene3D" id="1.10.10.10">
    <property type="entry name" value="Winged helix-like DNA-binding domain superfamily/Winged helix DNA-binding domain"/>
    <property type="match status" value="1"/>
</dbReference>
<dbReference type="InterPro" id="IPR011006">
    <property type="entry name" value="CheY-like_superfamily"/>
</dbReference>
<dbReference type="InterPro" id="IPR001867">
    <property type="entry name" value="OmpR/PhoB-type_DNA-bd"/>
</dbReference>
<dbReference type="InterPro" id="IPR001789">
    <property type="entry name" value="Sig_transdc_resp-reg_receiver"/>
</dbReference>
<dbReference type="InterPro" id="IPR039420">
    <property type="entry name" value="WalR-like"/>
</dbReference>
<dbReference type="InterPro" id="IPR036388">
    <property type="entry name" value="WH-like_DNA-bd_sf"/>
</dbReference>
<dbReference type="PANTHER" id="PTHR48111">
    <property type="entry name" value="REGULATOR OF RPOS"/>
    <property type="match status" value="1"/>
</dbReference>
<dbReference type="PANTHER" id="PTHR48111:SF67">
    <property type="entry name" value="TRANSCRIPTIONAL REGULATORY PROTEIN TCTD"/>
    <property type="match status" value="1"/>
</dbReference>
<dbReference type="Pfam" id="PF00072">
    <property type="entry name" value="Response_reg"/>
    <property type="match status" value="1"/>
</dbReference>
<dbReference type="Pfam" id="PF00486">
    <property type="entry name" value="Trans_reg_C"/>
    <property type="match status" value="1"/>
</dbReference>
<dbReference type="SMART" id="SM00448">
    <property type="entry name" value="REC"/>
    <property type="match status" value="1"/>
</dbReference>
<dbReference type="SMART" id="SM00862">
    <property type="entry name" value="Trans_reg_C"/>
    <property type="match status" value="1"/>
</dbReference>
<dbReference type="SUPFAM" id="SSF52172">
    <property type="entry name" value="CheY-like"/>
    <property type="match status" value="1"/>
</dbReference>
<dbReference type="PROSITE" id="PS51755">
    <property type="entry name" value="OMPR_PHOB"/>
    <property type="match status" value="1"/>
</dbReference>
<dbReference type="PROSITE" id="PS50110">
    <property type="entry name" value="RESPONSE_REGULATORY"/>
    <property type="match status" value="1"/>
</dbReference>
<reference key="1">
    <citation type="journal article" date="2005" name="J. Bacteriol.">
        <title>The RssAB two-component signal transduction system in Serratia marcescens regulates swarming motility and cell envelope architecture in response to exogenous saturated fatty acids.</title>
        <authorList>
            <person name="Lai H.-C."/>
            <person name="Soo P.-C."/>
            <person name="Wei J.-R."/>
            <person name="Yi W.-C."/>
            <person name="Liaw S.-J."/>
            <person name="Horng Y.-T."/>
            <person name="Lin S.-M."/>
            <person name="Ho S.-W."/>
            <person name="Swift S."/>
            <person name="Williams P."/>
        </authorList>
    </citation>
    <scope>NUCLEOTIDE SEQUENCE [GENOMIC DNA]</scope>
    <scope>FUNCTION</scope>
    <source>
        <strain>CH10</strain>
    </source>
</reference>
<reference key="2">
    <citation type="journal article" date="2005" name="J. Bacteriol.">
        <title>Biochemical characterization of RssA-RssB, a two-component signal transduction system regulating swarming behavior in Serratia marcescens.</title>
        <authorList>
            <person name="Wei J.-R."/>
            <person name="Tsai Y.-H."/>
            <person name="Soo P.-C."/>
            <person name="Horng Y.-T."/>
            <person name="Hsieh S.-C."/>
            <person name="Ho S.-W."/>
            <person name="Lai H.-C."/>
        </authorList>
    </citation>
    <scope>PROMOTER BINDING STUDIES</scope>
    <scope>PHOSPHORYLATION AT ASP-51</scope>
    <scope>MUTAGENESIS OF ASP-51</scope>
    <scope>DISRUPTION PHENOTYPE</scope>
    <source>
        <strain>CH1</strain>
    </source>
</reference>
<protein>
    <recommendedName>
        <fullName>Swarming motility regulation protein RssB</fullName>
    </recommendedName>
</protein>
<evidence type="ECO:0000250" key="1"/>
<evidence type="ECO:0000255" key="2">
    <source>
        <dbReference type="PROSITE-ProRule" id="PRU00169"/>
    </source>
</evidence>
<evidence type="ECO:0000255" key="3">
    <source>
        <dbReference type="PROSITE-ProRule" id="PRU01091"/>
    </source>
</evidence>
<evidence type="ECO:0000269" key="4">
    <source>
    </source>
</evidence>
<evidence type="ECO:0000269" key="5">
    <source>
    </source>
</evidence>
<comment type="function">
    <text evidence="4">Member of the two-component regulatory system RssA/RssB involved in regulation of swarming motility which has been shown to be inhibited by saturated fatty acids. RssA/RssB regulates cellular fatty acid composition, hemolysin production and cell surface topography. RssA/RssB negatively regulates the activity of SlhBA. It can also act as a negative regulator for the control of the swarming initiation. RssB binds its own promoter.</text>
</comment>
<comment type="subcellular location">
    <subcellularLocation>
        <location evidence="1">Cytoplasm</location>
    </subcellularLocation>
</comment>
<comment type="disruption phenotype">
    <text evidence="5">Mutation in either rssA or rssB confers a precocious-swarming phenotype on LB agar: swarming occurs at 37 degrees Celsius and is initiated at a lower cell density and more rapidly than the swarming of the parent strain at 30 degrees Celsius. Both mutants also exhibit increased hemolysin activity and altered cell surface topology.</text>
</comment>
<keyword id="KW-0963">Cytoplasm</keyword>
<keyword id="KW-0238">DNA-binding</keyword>
<keyword id="KW-0597">Phosphoprotein</keyword>
<keyword id="KW-0804">Transcription</keyword>
<keyword id="KW-0805">Transcription regulation</keyword>
<keyword id="KW-0902">Two-component regulatory system</keyword>
<proteinExistence type="evidence at protein level"/>
<name>RSSB_SERMA</name>
<gene>
    <name type="primary">rssB</name>
</gene>
<feature type="chain" id="PRO_0000081222" description="Swarming motility regulation protein RssB">
    <location>
        <begin position="1"/>
        <end position="219"/>
    </location>
</feature>
<feature type="domain" description="Response regulatory" evidence="2">
    <location>
        <begin position="2"/>
        <end position="116"/>
    </location>
</feature>
<feature type="DNA-binding region" description="OmpR/PhoB-type" evidence="3">
    <location>
        <begin position="124"/>
        <end position="218"/>
    </location>
</feature>
<feature type="modified residue" description="4-aspartylphosphate" evidence="2 5">
    <location>
        <position position="51"/>
    </location>
</feature>
<feature type="mutagenesis site" description="No phosphorylation." evidence="5">
    <original>D</original>
    <variation>E</variation>
    <location>
        <position position="51"/>
    </location>
</feature>
<sequence length="219" mass="24453">MNILLVEDDLQLGKALCRALELAGFNLCWVRLIADAENKLSSGGFDLMLLDLTLPDGDGLQKLIAWRAAGQNIPIIILTARDRIESLVNSLDSGANDFLAKPFALPELISRVKAVNRRMAGFASQTWSLGALYLDPVNHQVMLDNELLMLSKKEYHLLHELMRCAGTVVRKAVLEQRLFGHGDSVESNSLEVHMHNLRRKIGKDRVITVRGIGYLLKKE</sequence>
<organism>
    <name type="scientific">Serratia marcescens</name>
    <dbReference type="NCBI Taxonomy" id="615"/>
    <lineage>
        <taxon>Bacteria</taxon>
        <taxon>Pseudomonadati</taxon>
        <taxon>Pseudomonadota</taxon>
        <taxon>Gammaproteobacteria</taxon>
        <taxon>Enterobacterales</taxon>
        <taxon>Yersiniaceae</taxon>
        <taxon>Serratia</taxon>
    </lineage>
</organism>
<accession>Q8GP20</accession>